<protein>
    <recommendedName>
        <fullName evidence="1">Acetate kinase</fullName>
        <ecNumber evidence="1">2.7.2.1</ecNumber>
    </recommendedName>
    <alternativeName>
        <fullName evidence="1">Acetokinase</fullName>
    </alternativeName>
</protein>
<comment type="function">
    <text evidence="1">Catalyzes the formation of acetyl phosphate from acetate and ATP. Can also catalyze the reverse reaction.</text>
</comment>
<comment type="catalytic activity">
    <reaction evidence="1">
        <text>acetate + ATP = acetyl phosphate + ADP</text>
        <dbReference type="Rhea" id="RHEA:11352"/>
        <dbReference type="ChEBI" id="CHEBI:22191"/>
        <dbReference type="ChEBI" id="CHEBI:30089"/>
        <dbReference type="ChEBI" id="CHEBI:30616"/>
        <dbReference type="ChEBI" id="CHEBI:456216"/>
        <dbReference type="EC" id="2.7.2.1"/>
    </reaction>
</comment>
<comment type="cofactor">
    <cofactor evidence="1">
        <name>Mg(2+)</name>
        <dbReference type="ChEBI" id="CHEBI:18420"/>
    </cofactor>
    <cofactor evidence="1">
        <name>Mn(2+)</name>
        <dbReference type="ChEBI" id="CHEBI:29035"/>
    </cofactor>
    <text evidence="1">Mg(2+). Can also accept Mn(2+).</text>
</comment>
<comment type="pathway">
    <text evidence="1">Metabolic intermediate biosynthesis; acetyl-CoA biosynthesis; acetyl-CoA from acetate: step 1/2.</text>
</comment>
<comment type="subunit">
    <text evidence="1">Homodimer.</text>
</comment>
<comment type="subcellular location">
    <subcellularLocation>
        <location evidence="1">Cytoplasm</location>
    </subcellularLocation>
</comment>
<comment type="similarity">
    <text evidence="1">Belongs to the acetokinase family.</text>
</comment>
<sequence length="407" mass="43353">MSSTRVLVLNSGSSSVKYQLIDMRDGERLAAGLVERIGERTSRLRHTLVAAGDTREQEGPIADHEAALKAVAAELGRDGLGLDSPELAAIGHRVVHGGEFFSEPTLIDENVLTEIERLIPVAPLHNPANLTGIRTAQALRPDLPQVAVFDTAFHTTMPESAARYAIDPKIADRYRIRRYGFHGTSHAYVSRETARLLGRAPGDVNVIVLHLGNGASASAVRGGRCVDTSMGLTPLEGLVMGTRSGDMDPAVIFHLMRVGGMSADEIDTLLNKRSGLFGLCGDNDMREIRRRVDEDDEQAGLAFDIYIHRLKKYIGAYYAVLGRVDAVAFTAGVGENSAPVREAAVAGLEGLGLAVDGGLNAVRGDGARLISPAGARVAVAVVPTDEEMEIATQTYALVSESGNPDLT</sequence>
<evidence type="ECO:0000255" key="1">
    <source>
        <dbReference type="HAMAP-Rule" id="MF_00020"/>
    </source>
</evidence>
<gene>
    <name evidence="1" type="primary">ackA</name>
    <name type="ordered locus">SCO5424</name>
    <name type="ORF">SC8F4.28c</name>
</gene>
<keyword id="KW-0067">ATP-binding</keyword>
<keyword id="KW-0963">Cytoplasm</keyword>
<keyword id="KW-0418">Kinase</keyword>
<keyword id="KW-0460">Magnesium</keyword>
<keyword id="KW-0479">Metal-binding</keyword>
<keyword id="KW-0547">Nucleotide-binding</keyword>
<keyword id="KW-1185">Reference proteome</keyword>
<keyword id="KW-0808">Transferase</keyword>
<dbReference type="EC" id="2.7.2.1" evidence="1"/>
<dbReference type="EMBL" id="AL939123">
    <property type="protein sequence ID" value="CAB70654.1"/>
    <property type="molecule type" value="Genomic_DNA"/>
</dbReference>
<dbReference type="RefSeq" id="NP_629563.1">
    <property type="nucleotide sequence ID" value="NC_003888.3"/>
</dbReference>
<dbReference type="RefSeq" id="WP_011030238.1">
    <property type="nucleotide sequence ID" value="NZ_VNID01000011.1"/>
</dbReference>
<dbReference type="SMR" id="Q9L298"/>
<dbReference type="FunCoup" id="Q9L298">
    <property type="interactions" value="167"/>
</dbReference>
<dbReference type="STRING" id="100226.gene:17763076"/>
<dbReference type="PaxDb" id="100226-SCO5424"/>
<dbReference type="KEGG" id="sco:SCO5424"/>
<dbReference type="PATRIC" id="fig|100226.15.peg.5505"/>
<dbReference type="eggNOG" id="COG0282">
    <property type="taxonomic scope" value="Bacteria"/>
</dbReference>
<dbReference type="HOGENOM" id="CLU_020352_0_1_11"/>
<dbReference type="InParanoid" id="Q9L298"/>
<dbReference type="OrthoDB" id="9802453at2"/>
<dbReference type="PhylomeDB" id="Q9L298"/>
<dbReference type="UniPathway" id="UPA00340">
    <property type="reaction ID" value="UER00458"/>
</dbReference>
<dbReference type="Proteomes" id="UP000001973">
    <property type="component" value="Chromosome"/>
</dbReference>
<dbReference type="GO" id="GO:0005737">
    <property type="term" value="C:cytoplasm"/>
    <property type="evidence" value="ECO:0007669"/>
    <property type="project" value="UniProtKB-SubCell"/>
</dbReference>
<dbReference type="GO" id="GO:0008776">
    <property type="term" value="F:acetate kinase activity"/>
    <property type="evidence" value="ECO:0000318"/>
    <property type="project" value="GO_Central"/>
</dbReference>
<dbReference type="GO" id="GO:0005524">
    <property type="term" value="F:ATP binding"/>
    <property type="evidence" value="ECO:0007669"/>
    <property type="project" value="UniProtKB-KW"/>
</dbReference>
<dbReference type="GO" id="GO:0000287">
    <property type="term" value="F:magnesium ion binding"/>
    <property type="evidence" value="ECO:0007669"/>
    <property type="project" value="UniProtKB-UniRule"/>
</dbReference>
<dbReference type="GO" id="GO:0006083">
    <property type="term" value="P:acetate metabolic process"/>
    <property type="evidence" value="ECO:0000318"/>
    <property type="project" value="GO_Central"/>
</dbReference>
<dbReference type="GO" id="GO:0006085">
    <property type="term" value="P:acetyl-CoA biosynthetic process"/>
    <property type="evidence" value="ECO:0007669"/>
    <property type="project" value="UniProtKB-UniRule"/>
</dbReference>
<dbReference type="CDD" id="cd24010">
    <property type="entry name" value="ASKHA_NBD_AcK_PK"/>
    <property type="match status" value="1"/>
</dbReference>
<dbReference type="Gene3D" id="3.30.420.40">
    <property type="match status" value="2"/>
</dbReference>
<dbReference type="HAMAP" id="MF_00020">
    <property type="entry name" value="Acetate_kinase"/>
    <property type="match status" value="1"/>
</dbReference>
<dbReference type="InterPro" id="IPR004372">
    <property type="entry name" value="Ac/propionate_kinase"/>
</dbReference>
<dbReference type="InterPro" id="IPR000890">
    <property type="entry name" value="Aliphatic_acid_kin_short-chain"/>
</dbReference>
<dbReference type="InterPro" id="IPR023865">
    <property type="entry name" value="Aliphatic_acid_kinase_CS"/>
</dbReference>
<dbReference type="InterPro" id="IPR043129">
    <property type="entry name" value="ATPase_NBD"/>
</dbReference>
<dbReference type="NCBIfam" id="TIGR00016">
    <property type="entry name" value="ackA"/>
    <property type="match status" value="1"/>
</dbReference>
<dbReference type="PANTHER" id="PTHR21060">
    <property type="entry name" value="ACETATE KINASE"/>
    <property type="match status" value="1"/>
</dbReference>
<dbReference type="PANTHER" id="PTHR21060:SF15">
    <property type="entry name" value="ACETATE KINASE-RELATED"/>
    <property type="match status" value="1"/>
</dbReference>
<dbReference type="Pfam" id="PF00871">
    <property type="entry name" value="Acetate_kinase"/>
    <property type="match status" value="1"/>
</dbReference>
<dbReference type="PIRSF" id="PIRSF000722">
    <property type="entry name" value="Acetate_prop_kin"/>
    <property type="match status" value="1"/>
</dbReference>
<dbReference type="PRINTS" id="PR00471">
    <property type="entry name" value="ACETATEKNASE"/>
</dbReference>
<dbReference type="SUPFAM" id="SSF53067">
    <property type="entry name" value="Actin-like ATPase domain"/>
    <property type="match status" value="2"/>
</dbReference>
<dbReference type="PROSITE" id="PS01075">
    <property type="entry name" value="ACETATE_KINASE_1"/>
    <property type="match status" value="1"/>
</dbReference>
<dbReference type="PROSITE" id="PS01076">
    <property type="entry name" value="ACETATE_KINASE_2"/>
    <property type="match status" value="1"/>
</dbReference>
<proteinExistence type="inferred from homology"/>
<organism>
    <name type="scientific">Streptomyces coelicolor (strain ATCC BAA-471 / A3(2) / M145)</name>
    <dbReference type="NCBI Taxonomy" id="100226"/>
    <lineage>
        <taxon>Bacteria</taxon>
        <taxon>Bacillati</taxon>
        <taxon>Actinomycetota</taxon>
        <taxon>Actinomycetes</taxon>
        <taxon>Kitasatosporales</taxon>
        <taxon>Streptomycetaceae</taxon>
        <taxon>Streptomyces</taxon>
        <taxon>Streptomyces albidoflavus group</taxon>
    </lineage>
</organism>
<name>ACKA_STRCO</name>
<reference key="1">
    <citation type="journal article" date="2002" name="Nature">
        <title>Complete genome sequence of the model actinomycete Streptomyces coelicolor A3(2).</title>
        <authorList>
            <person name="Bentley S.D."/>
            <person name="Chater K.F."/>
            <person name="Cerdeno-Tarraga A.-M."/>
            <person name="Challis G.L."/>
            <person name="Thomson N.R."/>
            <person name="James K.D."/>
            <person name="Harris D.E."/>
            <person name="Quail M.A."/>
            <person name="Kieser H."/>
            <person name="Harper D."/>
            <person name="Bateman A."/>
            <person name="Brown S."/>
            <person name="Chandra G."/>
            <person name="Chen C.W."/>
            <person name="Collins M."/>
            <person name="Cronin A."/>
            <person name="Fraser A."/>
            <person name="Goble A."/>
            <person name="Hidalgo J."/>
            <person name="Hornsby T."/>
            <person name="Howarth S."/>
            <person name="Huang C.-H."/>
            <person name="Kieser T."/>
            <person name="Larke L."/>
            <person name="Murphy L.D."/>
            <person name="Oliver K."/>
            <person name="O'Neil S."/>
            <person name="Rabbinowitsch E."/>
            <person name="Rajandream M.A."/>
            <person name="Rutherford K.M."/>
            <person name="Rutter S."/>
            <person name="Seeger K."/>
            <person name="Saunders D."/>
            <person name="Sharp S."/>
            <person name="Squares R."/>
            <person name="Squares S."/>
            <person name="Taylor K."/>
            <person name="Warren T."/>
            <person name="Wietzorrek A."/>
            <person name="Woodward J.R."/>
            <person name="Barrell B.G."/>
            <person name="Parkhill J."/>
            <person name="Hopwood D.A."/>
        </authorList>
    </citation>
    <scope>NUCLEOTIDE SEQUENCE [LARGE SCALE GENOMIC DNA]</scope>
    <source>
        <strain>ATCC BAA-471 / A3(2) / M145</strain>
    </source>
</reference>
<feature type="chain" id="PRO_0000107621" description="Acetate kinase">
    <location>
        <begin position="1"/>
        <end position="407"/>
    </location>
</feature>
<feature type="active site" description="Proton donor/acceptor" evidence="1">
    <location>
        <position position="150"/>
    </location>
</feature>
<feature type="binding site" evidence="1">
    <location>
        <position position="10"/>
    </location>
    <ligand>
        <name>Mg(2+)</name>
        <dbReference type="ChEBI" id="CHEBI:18420"/>
    </ligand>
</feature>
<feature type="binding site" evidence="1">
    <location>
        <position position="17"/>
    </location>
    <ligand>
        <name>ATP</name>
        <dbReference type="ChEBI" id="CHEBI:30616"/>
    </ligand>
</feature>
<feature type="binding site" evidence="1">
    <location>
        <position position="93"/>
    </location>
    <ligand>
        <name>substrate</name>
    </ligand>
</feature>
<feature type="binding site" evidence="1">
    <location>
        <begin position="210"/>
        <end position="214"/>
    </location>
    <ligand>
        <name>ATP</name>
        <dbReference type="ChEBI" id="CHEBI:30616"/>
    </ligand>
</feature>
<feature type="binding site" evidence="1">
    <location>
        <begin position="284"/>
        <end position="286"/>
    </location>
    <ligand>
        <name>ATP</name>
        <dbReference type="ChEBI" id="CHEBI:30616"/>
    </ligand>
</feature>
<feature type="binding site" evidence="1">
    <location>
        <begin position="332"/>
        <end position="336"/>
    </location>
    <ligand>
        <name>ATP</name>
        <dbReference type="ChEBI" id="CHEBI:30616"/>
    </ligand>
</feature>
<feature type="binding site" evidence="1">
    <location>
        <position position="386"/>
    </location>
    <ligand>
        <name>Mg(2+)</name>
        <dbReference type="ChEBI" id="CHEBI:18420"/>
    </ligand>
</feature>
<feature type="site" description="Transition state stabilizer" evidence="1">
    <location>
        <position position="182"/>
    </location>
</feature>
<feature type="site" description="Transition state stabilizer" evidence="1">
    <location>
        <position position="243"/>
    </location>
</feature>
<accession>Q9L298</accession>